<gene>
    <name evidence="1" type="primary">kdsB</name>
    <name type="ordered locus">COSY_0766</name>
</gene>
<organism>
    <name type="scientific">Vesicomyosocius okutanii subsp. Calyptogena okutanii (strain HA)</name>
    <dbReference type="NCBI Taxonomy" id="412965"/>
    <lineage>
        <taxon>Bacteria</taxon>
        <taxon>Pseudomonadati</taxon>
        <taxon>Pseudomonadota</taxon>
        <taxon>Gammaproteobacteria</taxon>
        <taxon>Candidatus Pseudothioglobaceae</taxon>
        <taxon>Candidatus Vesicomyosocius</taxon>
    </lineage>
</organism>
<name>KDSB_VESOH</name>
<comment type="function">
    <text evidence="1">Activates KDO (a required 8-carbon sugar) for incorporation into bacterial lipopolysaccharide in Gram-negative bacteria.</text>
</comment>
<comment type="catalytic activity">
    <reaction evidence="1">
        <text>3-deoxy-alpha-D-manno-oct-2-ulosonate + CTP = CMP-3-deoxy-beta-D-manno-octulosonate + diphosphate</text>
        <dbReference type="Rhea" id="RHEA:23448"/>
        <dbReference type="ChEBI" id="CHEBI:33019"/>
        <dbReference type="ChEBI" id="CHEBI:37563"/>
        <dbReference type="ChEBI" id="CHEBI:85986"/>
        <dbReference type="ChEBI" id="CHEBI:85987"/>
        <dbReference type="EC" id="2.7.7.38"/>
    </reaction>
</comment>
<comment type="pathway">
    <text evidence="1">Nucleotide-sugar biosynthesis; CMP-3-deoxy-D-manno-octulosonate biosynthesis; CMP-3-deoxy-D-manno-octulosonate from 3-deoxy-D-manno-octulosonate and CTP: step 1/1.</text>
</comment>
<comment type="pathway">
    <text evidence="1">Bacterial outer membrane biogenesis; lipopolysaccharide biosynthesis.</text>
</comment>
<comment type="subcellular location">
    <subcellularLocation>
        <location evidence="1">Cytoplasm</location>
    </subcellularLocation>
</comment>
<comment type="similarity">
    <text evidence="1">Belongs to the KdsB family.</text>
</comment>
<dbReference type="EC" id="2.7.7.38" evidence="1"/>
<dbReference type="EMBL" id="AP009247">
    <property type="protein sequence ID" value="BAF61873.1"/>
    <property type="molecule type" value="Genomic_DNA"/>
</dbReference>
<dbReference type="RefSeq" id="WP_011930142.1">
    <property type="nucleotide sequence ID" value="NC_009465.1"/>
</dbReference>
<dbReference type="SMR" id="A5CVZ7"/>
<dbReference type="STRING" id="412965.COSY_0766"/>
<dbReference type="KEGG" id="vok:COSY_0766"/>
<dbReference type="eggNOG" id="COG1212">
    <property type="taxonomic scope" value="Bacteria"/>
</dbReference>
<dbReference type="HOGENOM" id="CLU_065038_1_0_6"/>
<dbReference type="OrthoDB" id="9815559at2"/>
<dbReference type="UniPathway" id="UPA00030"/>
<dbReference type="UniPathway" id="UPA00358">
    <property type="reaction ID" value="UER00476"/>
</dbReference>
<dbReference type="Proteomes" id="UP000000247">
    <property type="component" value="Chromosome"/>
</dbReference>
<dbReference type="GO" id="GO:0005829">
    <property type="term" value="C:cytosol"/>
    <property type="evidence" value="ECO:0007669"/>
    <property type="project" value="TreeGrafter"/>
</dbReference>
<dbReference type="GO" id="GO:0008690">
    <property type="term" value="F:3-deoxy-manno-octulosonate cytidylyltransferase activity"/>
    <property type="evidence" value="ECO:0007669"/>
    <property type="project" value="UniProtKB-UniRule"/>
</dbReference>
<dbReference type="GO" id="GO:0033468">
    <property type="term" value="P:CMP-keto-3-deoxy-D-manno-octulosonic acid biosynthetic process"/>
    <property type="evidence" value="ECO:0007669"/>
    <property type="project" value="UniProtKB-UniRule"/>
</dbReference>
<dbReference type="GO" id="GO:0009103">
    <property type="term" value="P:lipopolysaccharide biosynthetic process"/>
    <property type="evidence" value="ECO:0007669"/>
    <property type="project" value="UniProtKB-UniRule"/>
</dbReference>
<dbReference type="CDD" id="cd02517">
    <property type="entry name" value="CMP-KDO-Synthetase"/>
    <property type="match status" value="1"/>
</dbReference>
<dbReference type="FunFam" id="3.90.550.10:FF:000011">
    <property type="entry name" value="3-deoxy-manno-octulosonate cytidylyltransferase"/>
    <property type="match status" value="1"/>
</dbReference>
<dbReference type="Gene3D" id="3.90.550.10">
    <property type="entry name" value="Spore Coat Polysaccharide Biosynthesis Protein SpsA, Chain A"/>
    <property type="match status" value="1"/>
</dbReference>
<dbReference type="HAMAP" id="MF_00057">
    <property type="entry name" value="KdsB"/>
    <property type="match status" value="1"/>
</dbReference>
<dbReference type="InterPro" id="IPR003329">
    <property type="entry name" value="Cytidylyl_trans"/>
</dbReference>
<dbReference type="InterPro" id="IPR004528">
    <property type="entry name" value="KdsB"/>
</dbReference>
<dbReference type="InterPro" id="IPR029044">
    <property type="entry name" value="Nucleotide-diphossugar_trans"/>
</dbReference>
<dbReference type="NCBIfam" id="TIGR00466">
    <property type="entry name" value="kdsB"/>
    <property type="match status" value="1"/>
</dbReference>
<dbReference type="NCBIfam" id="NF003950">
    <property type="entry name" value="PRK05450.1-3"/>
    <property type="match status" value="1"/>
</dbReference>
<dbReference type="NCBIfam" id="NF003952">
    <property type="entry name" value="PRK05450.1-5"/>
    <property type="match status" value="1"/>
</dbReference>
<dbReference type="PANTHER" id="PTHR42866">
    <property type="entry name" value="3-DEOXY-MANNO-OCTULOSONATE CYTIDYLYLTRANSFERASE"/>
    <property type="match status" value="1"/>
</dbReference>
<dbReference type="PANTHER" id="PTHR42866:SF2">
    <property type="entry name" value="3-DEOXY-MANNO-OCTULOSONATE CYTIDYLYLTRANSFERASE, MITOCHONDRIAL"/>
    <property type="match status" value="1"/>
</dbReference>
<dbReference type="Pfam" id="PF02348">
    <property type="entry name" value="CTP_transf_3"/>
    <property type="match status" value="1"/>
</dbReference>
<dbReference type="SUPFAM" id="SSF53448">
    <property type="entry name" value="Nucleotide-diphospho-sugar transferases"/>
    <property type="match status" value="1"/>
</dbReference>
<evidence type="ECO:0000255" key="1">
    <source>
        <dbReference type="HAMAP-Rule" id="MF_00057"/>
    </source>
</evidence>
<accession>A5CVZ7</accession>
<protein>
    <recommendedName>
        <fullName evidence="1">3-deoxy-manno-octulosonate cytidylyltransferase</fullName>
        <ecNumber evidence="1">2.7.7.38</ecNumber>
    </recommendedName>
    <alternativeName>
        <fullName evidence="1">CMP-2-keto-3-deoxyoctulosonic acid synthase</fullName>
        <shortName evidence="1">CKS</shortName>
        <shortName evidence="1">CMP-KDO synthase</shortName>
    </alternativeName>
</protein>
<proteinExistence type="inferred from homology"/>
<feature type="chain" id="PRO_1000091909" description="3-deoxy-manno-octulosonate cytidylyltransferase">
    <location>
        <begin position="1"/>
        <end position="244"/>
    </location>
</feature>
<keyword id="KW-0963">Cytoplasm</keyword>
<keyword id="KW-0448">Lipopolysaccharide biosynthesis</keyword>
<keyword id="KW-0548">Nucleotidyltransferase</keyword>
<keyword id="KW-1185">Reference proteome</keyword>
<keyword id="KW-0808">Transferase</keyword>
<sequence>MNFSVIIPARYASSRLPAKLLRDVHGKPLIQLTYENAVNSGANRVIIATDDKRIEVVANDFGAITCMTDGHFTSGTLRIAQVLEKLDINDDEIIVNVQGDEPMLDPSVIDQVVNNLATNPMQIATLCKQITDKAQYFDPNCVKVVFNKIGKALYFSRATIPFFREARDFDLKLCYKHIGVYAYRAGVIKQYLTMNSSSYEKVEKLEQLTALNEGFDIHVAPACASVGHGVDIQRDLDEVRKELG</sequence>
<reference key="1">
    <citation type="journal article" date="2007" name="Curr. Biol.">
        <title>Reduced genome of the thioautotrophic intracellular symbiont in a deep-sea clam, Calyptogena okutanii.</title>
        <authorList>
            <person name="Kuwahara H."/>
            <person name="Yoshida T."/>
            <person name="Takaki Y."/>
            <person name="Shimamura S."/>
            <person name="Nishi S."/>
            <person name="Harada M."/>
            <person name="Matsuyama K."/>
            <person name="Takishita K."/>
            <person name="Kawato M."/>
            <person name="Uematsu K."/>
            <person name="Fujiwara Y."/>
            <person name="Sato T."/>
            <person name="Kato C."/>
            <person name="Kitagawa M."/>
            <person name="Kato I."/>
            <person name="Maruyama T."/>
        </authorList>
    </citation>
    <scope>NUCLEOTIDE SEQUENCE [LARGE SCALE GENOMIC DNA]</scope>
    <source>
        <strain>HA</strain>
    </source>
</reference>